<organism>
    <name type="scientific">Salmonella typhimurium (strain LT2 / SGSC1412 / ATCC 700720)</name>
    <dbReference type="NCBI Taxonomy" id="99287"/>
    <lineage>
        <taxon>Bacteria</taxon>
        <taxon>Pseudomonadati</taxon>
        <taxon>Pseudomonadota</taxon>
        <taxon>Gammaproteobacteria</taxon>
        <taxon>Enterobacterales</taxon>
        <taxon>Enterobacteriaceae</taxon>
        <taxon>Salmonella</taxon>
    </lineage>
</organism>
<feature type="chain" id="PRO_0000303856" description="Xaa-Pro dipeptidase">
    <location>
        <begin position="1"/>
        <end position="443"/>
    </location>
</feature>
<feature type="binding site" evidence="1">
    <location>
        <position position="246"/>
    </location>
    <ligand>
        <name>Mn(2+)</name>
        <dbReference type="ChEBI" id="CHEBI:29035"/>
        <label>2</label>
    </ligand>
</feature>
<feature type="binding site" evidence="1">
    <location>
        <position position="257"/>
    </location>
    <ligand>
        <name>Mn(2+)</name>
        <dbReference type="ChEBI" id="CHEBI:29035"/>
        <label>1</label>
    </ligand>
</feature>
<feature type="binding site" evidence="1">
    <location>
        <position position="257"/>
    </location>
    <ligand>
        <name>Mn(2+)</name>
        <dbReference type="ChEBI" id="CHEBI:29035"/>
        <label>2</label>
    </ligand>
</feature>
<feature type="binding site" evidence="1">
    <location>
        <position position="339"/>
    </location>
    <ligand>
        <name>Mn(2+)</name>
        <dbReference type="ChEBI" id="CHEBI:29035"/>
        <label>1</label>
    </ligand>
</feature>
<feature type="binding site" evidence="1">
    <location>
        <position position="384"/>
    </location>
    <ligand>
        <name>Mn(2+)</name>
        <dbReference type="ChEBI" id="CHEBI:29035"/>
        <label>1</label>
    </ligand>
</feature>
<feature type="binding site" evidence="1">
    <location>
        <position position="423"/>
    </location>
    <ligand>
        <name>Mn(2+)</name>
        <dbReference type="ChEBI" id="CHEBI:29035"/>
        <label>1</label>
    </ligand>
</feature>
<feature type="binding site" evidence="1">
    <location>
        <position position="423"/>
    </location>
    <ligand>
        <name>Mn(2+)</name>
        <dbReference type="ChEBI" id="CHEBI:29035"/>
        <label>2</label>
    </ligand>
</feature>
<proteinExistence type="inferred from homology"/>
<dbReference type="EC" id="3.4.13.9" evidence="1"/>
<dbReference type="EMBL" id="AF233324">
    <property type="protein sequence ID" value="AAF33408.1"/>
    <property type="molecule type" value="Genomic_DNA"/>
</dbReference>
<dbReference type="EMBL" id="AE006468">
    <property type="protein sequence ID" value="AAL22828.1"/>
    <property type="molecule type" value="Genomic_DNA"/>
</dbReference>
<dbReference type="RefSeq" id="NP_462869.1">
    <property type="nucleotide sequence ID" value="NC_003197.2"/>
</dbReference>
<dbReference type="RefSeq" id="WP_000444529.1">
    <property type="nucleotide sequence ID" value="NC_003197.2"/>
</dbReference>
<dbReference type="SMR" id="Q7CPD4"/>
<dbReference type="STRING" id="99287.STM3984"/>
<dbReference type="MEROPS" id="M24.003"/>
<dbReference type="PaxDb" id="99287-STM3984"/>
<dbReference type="GeneID" id="1255510"/>
<dbReference type="KEGG" id="stm:STM3984"/>
<dbReference type="PATRIC" id="fig|99287.12.peg.4203"/>
<dbReference type="HOGENOM" id="CLU_050675_0_0_6"/>
<dbReference type="OMA" id="DFWHKVA"/>
<dbReference type="PhylomeDB" id="Q7CPD4"/>
<dbReference type="BioCyc" id="SENT99287:STM3984-MONOMER"/>
<dbReference type="Proteomes" id="UP000001014">
    <property type="component" value="Chromosome"/>
</dbReference>
<dbReference type="GO" id="GO:0005829">
    <property type="term" value="C:cytosol"/>
    <property type="evidence" value="ECO:0000318"/>
    <property type="project" value="GO_Central"/>
</dbReference>
<dbReference type="GO" id="GO:0004177">
    <property type="term" value="F:aminopeptidase activity"/>
    <property type="evidence" value="ECO:0000318"/>
    <property type="project" value="GO_Central"/>
</dbReference>
<dbReference type="GO" id="GO:0046872">
    <property type="term" value="F:metal ion binding"/>
    <property type="evidence" value="ECO:0007669"/>
    <property type="project" value="UniProtKB-KW"/>
</dbReference>
<dbReference type="GO" id="GO:0008235">
    <property type="term" value="F:metalloexopeptidase activity"/>
    <property type="evidence" value="ECO:0007669"/>
    <property type="project" value="UniProtKB-UniRule"/>
</dbReference>
<dbReference type="GO" id="GO:0016795">
    <property type="term" value="F:phosphoric triester hydrolase activity"/>
    <property type="evidence" value="ECO:0007669"/>
    <property type="project" value="InterPro"/>
</dbReference>
<dbReference type="GO" id="GO:0102009">
    <property type="term" value="F:proline dipeptidase activity"/>
    <property type="evidence" value="ECO:0007669"/>
    <property type="project" value="UniProtKB-EC"/>
</dbReference>
<dbReference type="GO" id="GO:0006508">
    <property type="term" value="P:proteolysis"/>
    <property type="evidence" value="ECO:0000318"/>
    <property type="project" value="GO_Central"/>
</dbReference>
<dbReference type="CDD" id="cd01087">
    <property type="entry name" value="Prolidase"/>
    <property type="match status" value="1"/>
</dbReference>
<dbReference type="FunFam" id="3.40.350.10:FF:000002">
    <property type="entry name" value="Xaa-Pro dipeptidase"/>
    <property type="match status" value="1"/>
</dbReference>
<dbReference type="FunFam" id="3.90.230.10:FF:000006">
    <property type="entry name" value="Xaa-Pro dipeptidase"/>
    <property type="match status" value="1"/>
</dbReference>
<dbReference type="Gene3D" id="3.90.230.10">
    <property type="entry name" value="Creatinase/methionine aminopeptidase superfamily"/>
    <property type="match status" value="1"/>
</dbReference>
<dbReference type="Gene3D" id="3.40.350.10">
    <property type="entry name" value="Creatinase/prolidase N-terminal domain"/>
    <property type="match status" value="1"/>
</dbReference>
<dbReference type="HAMAP" id="MF_01279">
    <property type="entry name" value="X_Pro_dipeptid"/>
    <property type="match status" value="1"/>
</dbReference>
<dbReference type="InterPro" id="IPR029149">
    <property type="entry name" value="Creatin/AminoP/Spt16_N"/>
</dbReference>
<dbReference type="InterPro" id="IPR036005">
    <property type="entry name" value="Creatinase/aminopeptidase-like"/>
</dbReference>
<dbReference type="InterPro" id="IPR048819">
    <property type="entry name" value="PepQ_N"/>
</dbReference>
<dbReference type="InterPro" id="IPR000994">
    <property type="entry name" value="Pept_M24"/>
</dbReference>
<dbReference type="InterPro" id="IPR001131">
    <property type="entry name" value="Peptidase_M24B_aminopep-P_CS"/>
</dbReference>
<dbReference type="InterPro" id="IPR052433">
    <property type="entry name" value="X-Pro_dipept-like"/>
</dbReference>
<dbReference type="InterPro" id="IPR022846">
    <property type="entry name" value="X_Pro_dipept"/>
</dbReference>
<dbReference type="NCBIfam" id="NF010133">
    <property type="entry name" value="PRK13607.1"/>
    <property type="match status" value="1"/>
</dbReference>
<dbReference type="PANTHER" id="PTHR43226">
    <property type="entry name" value="XAA-PRO AMINOPEPTIDASE 3"/>
    <property type="match status" value="1"/>
</dbReference>
<dbReference type="PANTHER" id="PTHR43226:SF8">
    <property type="entry name" value="XAA-PRO DIPEPTIDASE"/>
    <property type="match status" value="1"/>
</dbReference>
<dbReference type="Pfam" id="PF21216">
    <property type="entry name" value="PepQ_N"/>
    <property type="match status" value="1"/>
</dbReference>
<dbReference type="Pfam" id="PF00557">
    <property type="entry name" value="Peptidase_M24"/>
    <property type="match status" value="1"/>
</dbReference>
<dbReference type="SUPFAM" id="SSF55920">
    <property type="entry name" value="Creatinase/aminopeptidase"/>
    <property type="match status" value="1"/>
</dbReference>
<dbReference type="PROSITE" id="PS00491">
    <property type="entry name" value="PROLINE_PEPTIDASE"/>
    <property type="match status" value="1"/>
</dbReference>
<reference key="1">
    <citation type="journal article" date="2001" name="Nature">
        <title>Complete genome sequence of Salmonella enterica serovar Typhimurium LT2.</title>
        <authorList>
            <person name="McClelland M."/>
            <person name="Sanderson K.E."/>
            <person name="Spieth J."/>
            <person name="Clifton S.W."/>
            <person name="Latreille P."/>
            <person name="Courtney L."/>
            <person name="Porwollik S."/>
            <person name="Ali J."/>
            <person name="Dante M."/>
            <person name="Du F."/>
            <person name="Hou S."/>
            <person name="Layman D."/>
            <person name="Leonard S."/>
            <person name="Nguyen C."/>
            <person name="Scott K."/>
            <person name="Holmes A."/>
            <person name="Grewal N."/>
            <person name="Mulvaney E."/>
            <person name="Ryan E."/>
            <person name="Sun H."/>
            <person name="Florea L."/>
            <person name="Miller W."/>
            <person name="Stoneking T."/>
            <person name="Nhan M."/>
            <person name="Waterston R."/>
            <person name="Wilson R.K."/>
        </authorList>
    </citation>
    <scope>NUCLEOTIDE SEQUENCE [LARGE SCALE GENOMIC DNA]</scope>
    <source>
        <strain>LT2 / SGSC1412 / ATCC 700720</strain>
    </source>
</reference>
<keyword id="KW-0224">Dipeptidase</keyword>
<keyword id="KW-0378">Hydrolase</keyword>
<keyword id="KW-0464">Manganese</keyword>
<keyword id="KW-0479">Metal-binding</keyword>
<keyword id="KW-0482">Metalloprotease</keyword>
<keyword id="KW-0645">Protease</keyword>
<keyword id="KW-1185">Reference proteome</keyword>
<sequence length="443" mass="50170">MESLAALYKNHIVTLQERTRDVLARFKLDALLIHSGELFNVFLDDHPYPFKVNPQFKAWVPVTQVPNCWLLVDGVNKPKLWFYLPVDYWHNVEPLPTSFWTEEVEVVALPKADGIGSQLPAARGNIGYIGPVPERALQLDIAASNINPKGVIDYLHYYRAYKTDYELACMREAQKMAVSGHRAAEEAFRSGMSEFDINLAYLTATGHRDTDVPYSNIVALNEHAAVLHYTKLDHQAPSEMRSFLLDAGAEYNGYAADLTRTWSAKSDNDYAHLVKDVNDEQLALIATMKAGVSYVDYHIQFHQRIAKLLRKHQIITDMSEEAMVENDLTGPFMPHGIGHPLGLQVHDVAGFMQDDSGTHLAAPSKYPYLRCTRVLQPRMVLTIEPGIYFIESLLAPWREGPFSKHFNWQKIEALKPFGGIRIEDNVVIHENGVENMTRDLKLA</sequence>
<gene>
    <name evidence="1" type="primary">pepQ</name>
    <name type="ordered locus">STM3984</name>
</gene>
<protein>
    <recommendedName>
        <fullName evidence="1">Xaa-Pro dipeptidase</fullName>
        <shortName evidence="1">X-Pro dipeptidase</shortName>
        <ecNumber evidence="1">3.4.13.9</ecNumber>
    </recommendedName>
    <alternativeName>
        <fullName evidence="1">Imidodipeptidase</fullName>
    </alternativeName>
    <alternativeName>
        <fullName evidence="1">Proline dipeptidase</fullName>
        <shortName evidence="1">Prolidase</shortName>
    </alternativeName>
</protein>
<comment type="function">
    <text evidence="1">Splits dipeptides with a prolyl residue in the C-terminal position.</text>
</comment>
<comment type="catalytic activity">
    <reaction evidence="1">
        <text>Xaa-L-Pro dipeptide + H2O = an L-alpha-amino acid + L-proline</text>
        <dbReference type="Rhea" id="RHEA:76407"/>
        <dbReference type="ChEBI" id="CHEBI:15377"/>
        <dbReference type="ChEBI" id="CHEBI:59869"/>
        <dbReference type="ChEBI" id="CHEBI:60039"/>
        <dbReference type="ChEBI" id="CHEBI:195196"/>
        <dbReference type="EC" id="3.4.13.9"/>
    </reaction>
</comment>
<comment type="cofactor">
    <cofactor evidence="1">
        <name>Mn(2+)</name>
        <dbReference type="ChEBI" id="CHEBI:29035"/>
    </cofactor>
    <text evidence="1">Binds 2 manganese ions per subunit.</text>
</comment>
<comment type="similarity">
    <text evidence="1">Belongs to the peptidase M24B family. Bacterial-type prolidase subfamily.</text>
</comment>
<accession>Q7CPD4</accession>
<accession>Q7BM03</accession>
<evidence type="ECO:0000255" key="1">
    <source>
        <dbReference type="HAMAP-Rule" id="MF_01279"/>
    </source>
</evidence>
<name>PEPQ_SALTY</name>